<sequence length="548" mass="63519">MSAKEEKVIRPIVHFPPSVWADQFLIFDDEQAEQANVEQVVNELREDVRKDIVSSLDVQAEHTNLLKLIDAIQRLGIAYYFEGEIEQALQHIYDTYGDDWKGRSPSLWFRIFRQQGFYVSCDIFKNYKEEDGSFKESLTNDVEGLLELYEATYLGVQGEGILDDALVFTRTCLDKLAKDLVHSNPTLSTHIQEALQQPLHKRLTRLEALRYIPTYEQLSSHNESLLKLAKLGFNLLQSLHRKELSEVSRWWKGLDIPNNLPYARDRMVECYFWALGVYFEPKYSRARIFLAKVISLATVLDDTYDAYGIYEELKIFTEAIQRWSITCIDTLPEYMKLLYKGVLNIYKEMEEIMGKEGKAHHLSYAKESMKEFIRSYMMEAKWANEGYVPTAEEHMSVAFVSSGYSMLATTCFVGMGDIVTDEAFEWALTKPPIVKASCAIARLMDDIHSQKEEKERIHVASSVESYMKQYDVTEEHVHKVFHKKIEDAWKDITRESPVCKDIPMPLMTRVINLARVMDVLYKHKDGFTNVGQELKDHIKSLLVHPIPI</sequence>
<gene>
    <name evidence="3" type="primary">CarS</name>
</gene>
<comment type="function">
    <text evidence="2">Sesquiterpene synthase involved in the biosynthesis of beta-caryophyllene, a sesquiterpene with anti-inflammatory and anti-carcinogenic activities.</text>
</comment>
<comment type="catalytic activity">
    <reaction evidence="2">
        <text>(2E,6E)-farnesyl diphosphate = (-)-(E)-beta-caryophyllene + diphosphate</text>
        <dbReference type="Rhea" id="RHEA:28294"/>
        <dbReference type="ChEBI" id="CHEBI:10357"/>
        <dbReference type="ChEBI" id="CHEBI:33019"/>
        <dbReference type="ChEBI" id="CHEBI:175763"/>
        <dbReference type="EC" id="4.2.3.57"/>
    </reaction>
    <physiologicalReaction direction="left-to-right" evidence="2">
        <dbReference type="Rhea" id="RHEA:28295"/>
    </physiologicalReaction>
</comment>
<comment type="cofactor">
    <cofactor evidence="1">
        <name>Mg(2+)</name>
        <dbReference type="ChEBI" id="CHEBI:18420"/>
    </cofactor>
    <text evidence="1">Binds 3 Mg(2+) ions per subunit.</text>
</comment>
<comment type="pathway">
    <text evidence="2">Secondary metabolite biosynthesis; terpenoid biosynthesis.</text>
</comment>
<comment type="subunit">
    <text evidence="1">Monomer.</text>
</comment>
<comment type="tissue specificity">
    <text evidence="2">Higher levels in leaves than in flowers and stems.</text>
</comment>
<comment type="domain">
    <text evidence="1">The Asp-Asp-Xaa-Xaa-Asp/Glu (DDXXD/E) motif is important for the catalytic activity, presumably through binding to Mg(2+).</text>
</comment>
<comment type="similarity">
    <text evidence="4">Belongs to the terpene synthase family.</text>
</comment>
<feature type="chain" id="PRO_0000448395" description="E-beta-caryophyllene synthase">
    <location>
        <begin position="1"/>
        <end position="548"/>
    </location>
</feature>
<feature type="short sequence motif" description="DDXXD motif" evidence="4">
    <location>
        <begin position="301"/>
        <end position="305"/>
    </location>
</feature>
<feature type="binding site" evidence="1">
    <location>
        <position position="301"/>
    </location>
    <ligand>
        <name>Mg(2+)</name>
        <dbReference type="ChEBI" id="CHEBI:18420"/>
        <label>1</label>
    </ligand>
</feature>
<feature type="binding site" evidence="1">
    <location>
        <position position="301"/>
    </location>
    <ligand>
        <name>Mg(2+)</name>
        <dbReference type="ChEBI" id="CHEBI:18420"/>
        <label>2</label>
    </ligand>
</feature>
<feature type="binding site" evidence="1">
    <location>
        <position position="305"/>
    </location>
    <ligand>
        <name>Mg(2+)</name>
        <dbReference type="ChEBI" id="CHEBI:18420"/>
        <label>1</label>
    </ligand>
</feature>
<feature type="binding site" evidence="1">
    <location>
        <position position="305"/>
    </location>
    <ligand>
        <name>Mg(2+)</name>
        <dbReference type="ChEBI" id="CHEBI:18420"/>
        <label>2</label>
    </ligand>
</feature>
<feature type="binding site" evidence="1">
    <location>
        <position position="445"/>
    </location>
    <ligand>
        <name>Mg(2+)</name>
        <dbReference type="ChEBI" id="CHEBI:18420"/>
        <label>3</label>
    </ligand>
</feature>
<feature type="binding site" evidence="1">
    <location>
        <position position="449"/>
    </location>
    <ligand>
        <name>Mg(2+)</name>
        <dbReference type="ChEBI" id="CHEBI:18420"/>
        <label>3</label>
    </ligand>
</feature>
<feature type="binding site" evidence="1">
    <location>
        <position position="453"/>
    </location>
    <ligand>
        <name>Mg(2+)</name>
        <dbReference type="ChEBI" id="CHEBI:18420"/>
        <label>3</label>
    </ligand>
</feature>
<dbReference type="EC" id="4.2.3.57" evidence="2"/>
<dbReference type="EMBL" id="JF819849">
    <property type="protein sequence ID" value="AEH41845.1"/>
    <property type="molecule type" value="mRNA"/>
</dbReference>
<dbReference type="SMR" id="F8UL81"/>
<dbReference type="UniPathway" id="UPA00213"/>
<dbReference type="GO" id="GO:0080016">
    <property type="term" value="F:(-)-E-beta-caryophyllene synthase activity"/>
    <property type="evidence" value="ECO:0000314"/>
    <property type="project" value="UniProtKB"/>
</dbReference>
<dbReference type="GO" id="GO:0000287">
    <property type="term" value="F:magnesium ion binding"/>
    <property type="evidence" value="ECO:0007669"/>
    <property type="project" value="InterPro"/>
</dbReference>
<dbReference type="GO" id="GO:0016102">
    <property type="term" value="P:diterpenoid biosynthetic process"/>
    <property type="evidence" value="ECO:0007669"/>
    <property type="project" value="InterPro"/>
</dbReference>
<dbReference type="GO" id="GO:0051762">
    <property type="term" value="P:sesquiterpene biosynthetic process"/>
    <property type="evidence" value="ECO:0000314"/>
    <property type="project" value="UniProtKB"/>
</dbReference>
<dbReference type="CDD" id="cd00684">
    <property type="entry name" value="Terpene_cyclase_plant_C1"/>
    <property type="match status" value="1"/>
</dbReference>
<dbReference type="FunFam" id="1.10.600.10:FF:000007">
    <property type="entry name" value="Isoprene synthase, chloroplastic"/>
    <property type="match status" value="1"/>
</dbReference>
<dbReference type="FunFam" id="1.50.10.130:FF:000001">
    <property type="entry name" value="Isoprene synthase, chloroplastic"/>
    <property type="match status" value="1"/>
</dbReference>
<dbReference type="Gene3D" id="1.10.600.10">
    <property type="entry name" value="Farnesyl Diphosphate Synthase"/>
    <property type="match status" value="1"/>
</dbReference>
<dbReference type="Gene3D" id="1.50.10.130">
    <property type="entry name" value="Terpene synthase, N-terminal domain"/>
    <property type="match status" value="1"/>
</dbReference>
<dbReference type="InterPro" id="IPR008949">
    <property type="entry name" value="Isoprenoid_synthase_dom_sf"/>
</dbReference>
<dbReference type="InterPro" id="IPR034741">
    <property type="entry name" value="Terpene_cyclase-like_1_C"/>
</dbReference>
<dbReference type="InterPro" id="IPR044814">
    <property type="entry name" value="Terpene_cyclase_plant_C1"/>
</dbReference>
<dbReference type="InterPro" id="IPR001906">
    <property type="entry name" value="Terpene_synth_N"/>
</dbReference>
<dbReference type="InterPro" id="IPR036965">
    <property type="entry name" value="Terpene_synth_N_sf"/>
</dbReference>
<dbReference type="InterPro" id="IPR050148">
    <property type="entry name" value="Terpene_synthase-like"/>
</dbReference>
<dbReference type="InterPro" id="IPR005630">
    <property type="entry name" value="Terpene_synthase_metal-bd"/>
</dbReference>
<dbReference type="InterPro" id="IPR008930">
    <property type="entry name" value="Terpenoid_cyclase/PrenylTrfase"/>
</dbReference>
<dbReference type="PANTHER" id="PTHR31225">
    <property type="entry name" value="OS04G0344100 PROTEIN-RELATED"/>
    <property type="match status" value="1"/>
</dbReference>
<dbReference type="PANTHER" id="PTHR31225:SF196">
    <property type="entry name" value="TERPENOID CYCLASES_PROTEIN PRENYLTRANSFERASE ALPHA-ALPHA TOROID-RELATED"/>
    <property type="match status" value="1"/>
</dbReference>
<dbReference type="Pfam" id="PF01397">
    <property type="entry name" value="Terpene_synth"/>
    <property type="match status" value="1"/>
</dbReference>
<dbReference type="Pfam" id="PF03936">
    <property type="entry name" value="Terpene_synth_C"/>
    <property type="match status" value="1"/>
</dbReference>
<dbReference type="SFLD" id="SFLDS00005">
    <property type="entry name" value="Isoprenoid_Synthase_Type_I"/>
    <property type="match status" value="1"/>
</dbReference>
<dbReference type="SFLD" id="SFLDG01019">
    <property type="entry name" value="Terpene_Cyclase_Like_1_C_Termi"/>
    <property type="match status" value="1"/>
</dbReference>
<dbReference type="SUPFAM" id="SSF48239">
    <property type="entry name" value="Terpenoid cyclases/Protein prenyltransferases"/>
    <property type="match status" value="1"/>
</dbReference>
<dbReference type="SUPFAM" id="SSF48576">
    <property type="entry name" value="Terpenoid synthases"/>
    <property type="match status" value="1"/>
</dbReference>
<evidence type="ECO:0000250" key="1">
    <source>
        <dbReference type="UniProtKB" id="Q40577"/>
    </source>
</evidence>
<evidence type="ECO:0000269" key="2">
    <source>
    </source>
</evidence>
<evidence type="ECO:0000303" key="3">
    <source>
    </source>
</evidence>
<evidence type="ECO:0000305" key="4"/>
<accession>F8UL81</accession>
<name>CARS_TANPA</name>
<keyword id="KW-0456">Lyase</keyword>
<keyword id="KW-0460">Magnesium</keyword>
<keyword id="KW-0479">Metal-binding</keyword>
<reference key="1">
    <citation type="journal article" date="2011" name="Phytochemistry">
        <title>Biosynthesis and localization of parthenolide in glandular trichomes of feverfew (Tanacetum parthenium L. Schulz Bip.).</title>
        <authorList>
            <person name="Majdi M."/>
            <person name="Liu Q."/>
            <person name="Karimzadeh G."/>
            <person name="Malboobi M.A."/>
            <person name="Beekwilder J."/>
            <person name="Cankar K."/>
            <person name="de Vos R."/>
            <person name="Todorovic S."/>
            <person name="Simonovic A."/>
            <person name="Bouwmeester H."/>
        </authorList>
    </citation>
    <scope>NUCLEOTIDE SEQUENCE [MRNA]</scope>
    <scope>CATALYTIC ACTIVITY</scope>
    <scope>FUNCTION</scope>
    <scope>TISSUE SPECIFICITY</scope>
</reference>
<proteinExistence type="evidence at protein level"/>
<organism>
    <name type="scientific">Tanacetum parthenium</name>
    <name type="common">Feverfew</name>
    <name type="synonym">Matricaria parthenium</name>
    <dbReference type="NCBI Taxonomy" id="127999"/>
    <lineage>
        <taxon>Eukaryota</taxon>
        <taxon>Viridiplantae</taxon>
        <taxon>Streptophyta</taxon>
        <taxon>Embryophyta</taxon>
        <taxon>Tracheophyta</taxon>
        <taxon>Spermatophyta</taxon>
        <taxon>Magnoliopsida</taxon>
        <taxon>eudicotyledons</taxon>
        <taxon>Gunneridae</taxon>
        <taxon>Pentapetalae</taxon>
        <taxon>asterids</taxon>
        <taxon>campanulids</taxon>
        <taxon>Asterales</taxon>
        <taxon>Asteraceae</taxon>
        <taxon>Asteroideae</taxon>
        <taxon>Anthemideae</taxon>
        <taxon>Anthemidinae</taxon>
        <taxon>Tanacetum</taxon>
    </lineage>
</organism>
<protein>
    <recommendedName>
        <fullName evidence="3">E-beta-caryophyllene synthase</fullName>
        <shortName evidence="3">TpCarS</shortName>
        <ecNumber evidence="2">4.2.3.57</ecNumber>
    </recommendedName>
</protein>